<keyword id="KW-1157">Cap snatching</keyword>
<keyword id="KW-1262">Eukaryotic host gene expression shutoff by virus</keyword>
<keyword id="KW-1191">Eukaryotic host transcription shutoff by virus</keyword>
<keyword id="KW-1190">Host gene expression shutoff by virus</keyword>
<keyword id="KW-1045">Host mitochondrion</keyword>
<keyword id="KW-1048">Host nucleus</keyword>
<keyword id="KW-0945">Host-virus interaction</keyword>
<keyword id="KW-1090">Inhibition of host innate immune response by virus</keyword>
<keyword id="KW-1097">Inhibition of host MAVS by virus</keyword>
<keyword id="KW-1113">Inhibition of host RLR pathway by virus</keyword>
<keyword id="KW-1104">Inhibition of host RNA polymerase II by virus</keyword>
<keyword id="KW-0506">mRNA capping</keyword>
<keyword id="KW-0507">mRNA processing</keyword>
<keyword id="KW-0899">Viral immunoevasion</keyword>
<keyword id="KW-1195">Viral transcription</keyword>
<keyword id="KW-0946">Virion</keyword>
<proteinExistence type="inferred from homology"/>
<comment type="function">
    <text evidence="1">Plays an essential role in transcription initiation and cap-stealing mechanism, in which cellular capped pre-mRNAs are used to generate primers for viral transcription. Binds the cap of the target pre-RNA which is subsequently cleaved after 10-13 nucleotides by PA. Plays a role in the initiation of the viral genome replication and modulates the activity of the ribonucleoprotein (RNP) complex. In addition, participates in the inhibition of type I interferon induction through interaction with the host mitochondrial antiviral signaling protein MAVS.</text>
</comment>
<comment type="subunit">
    <text evidence="1">Influenza RNA polymerase is composed of three subunits: PB1, PB2 and PA. Interacts (via N-terminus) with PB1 (via C-terminus). Interacts with nucleoprotein NP (via N-terminus). Interacts (via N-terminus) with host MAVS (via N-terminus); this interaction inhibits host innate immune response.</text>
</comment>
<comment type="subcellular location">
    <subcellularLocation>
        <location>Virion</location>
    </subcellularLocation>
    <subcellularLocation>
        <location evidence="1">Host nucleus</location>
    </subcellularLocation>
    <subcellularLocation>
        <location evidence="1">Host mitochondrion</location>
    </subcellularLocation>
</comment>
<comment type="similarity">
    <text evidence="2">Belongs to the influenza viruses PB2 family.</text>
</comment>
<gene>
    <name type="primary">PB2</name>
</gene>
<dbReference type="EMBL" id="AF046086">
    <property type="protein sequence ID" value="AAC32086.1"/>
    <property type="molecule type" value="Genomic_RNA"/>
</dbReference>
<dbReference type="SMR" id="Q9YX78"/>
<dbReference type="GO" id="GO:0033650">
    <property type="term" value="C:host cell mitochondrion"/>
    <property type="evidence" value="ECO:0007669"/>
    <property type="project" value="UniProtKB-SubCell"/>
</dbReference>
<dbReference type="GO" id="GO:0042025">
    <property type="term" value="C:host cell nucleus"/>
    <property type="evidence" value="ECO:0007669"/>
    <property type="project" value="UniProtKB-SubCell"/>
</dbReference>
<dbReference type="GO" id="GO:0044423">
    <property type="term" value="C:virion component"/>
    <property type="evidence" value="ECO:0007669"/>
    <property type="project" value="UniProtKB-KW"/>
</dbReference>
<dbReference type="GO" id="GO:0006370">
    <property type="term" value="P:7-methylguanosine mRNA capping"/>
    <property type="evidence" value="ECO:0007669"/>
    <property type="project" value="UniProtKB-KW"/>
</dbReference>
<dbReference type="GO" id="GO:0075526">
    <property type="term" value="P:cap snatching"/>
    <property type="evidence" value="ECO:0007669"/>
    <property type="project" value="UniProtKB-KW"/>
</dbReference>
<dbReference type="GO" id="GO:0039545">
    <property type="term" value="P:symbiont-mediated suppression of host cytoplasmic pattern recognition receptor signaling pathway via inhibition of MAVS activity"/>
    <property type="evidence" value="ECO:0007669"/>
    <property type="project" value="UniProtKB-KW"/>
</dbReference>
<dbReference type="GO" id="GO:0039657">
    <property type="term" value="P:symbiont-mediated suppression of host gene expression"/>
    <property type="evidence" value="ECO:0007669"/>
    <property type="project" value="UniProtKB-KW"/>
</dbReference>
<dbReference type="GO" id="GO:0039523">
    <property type="term" value="P:symbiont-mediated suppression of host mRNA transcription via inhibition of RNA polymerase II activity"/>
    <property type="evidence" value="ECO:0007669"/>
    <property type="project" value="UniProtKB-KW"/>
</dbReference>
<dbReference type="InterPro" id="IPR049110">
    <property type="entry name" value="Flu_PB2_2nd"/>
</dbReference>
<dbReference type="InterPro" id="IPR049114">
    <property type="entry name" value="Flu_PB2_6th"/>
</dbReference>
<dbReference type="InterPro" id="IPR048298">
    <property type="entry name" value="Flu_PB2_CAP-bd"/>
</dbReference>
<dbReference type="InterPro" id="IPR049111">
    <property type="entry name" value="Flu_PB2_middle"/>
</dbReference>
<dbReference type="InterPro" id="IPR049106">
    <property type="entry name" value="Flu_PB2_N"/>
</dbReference>
<dbReference type="InterPro" id="IPR049113">
    <property type="entry name" value="PB2_helical"/>
</dbReference>
<dbReference type="Pfam" id="PF20947">
    <property type="entry name" value="Flu_PB2_1st"/>
    <property type="match status" value="1"/>
</dbReference>
<dbReference type="Pfam" id="PF20948">
    <property type="entry name" value="Flu_PB2_2nd"/>
    <property type="match status" value="1"/>
</dbReference>
<dbReference type="Pfam" id="PF20949">
    <property type="entry name" value="Flu_PB2_3rd"/>
    <property type="match status" value="1"/>
</dbReference>
<dbReference type="Pfam" id="PF20950">
    <property type="entry name" value="Flu_PB2_4th"/>
    <property type="match status" value="1"/>
</dbReference>
<dbReference type="Pfam" id="PF00604">
    <property type="entry name" value="Flu_PB2_5th"/>
    <property type="match status" value="1"/>
</dbReference>
<dbReference type="Pfam" id="PF20951">
    <property type="entry name" value="Flu_PB2_6th"/>
    <property type="match status" value="1"/>
</dbReference>
<evidence type="ECO:0000250" key="1">
    <source>
        <dbReference type="UniProtKB" id="P03428"/>
    </source>
</evidence>
<evidence type="ECO:0000305" key="2"/>
<accession>Q9YX78</accession>
<sequence>MERIKELRDLMSQSRTREILTKTTVDHMAIIKKYTSGRQEKNPALRMKWMMAMKYPITADKRIMEMIPERNEQGQTLWSKTNDAGSDRVMVSPLAVTWWNRNGPTTSTVHYPKVYKTYFEKVERLKHGTFGPVHFRNQVKIRRRVDMNPGHADLSAKEAQDVIMEVVFPNEVGARILTSESQLTITKEKREELKNCNIAPLMVAYMLERELVRKTRFLPVAGGTSSVYIEVLHLTQGTCWEQMYTPGGEVRNDDVDQSLIIAARNIVRRATVSADPLASLLEMCHSTQIGGVRMVDILKQNPTEEQAVDICKAAMGLKISSSFSFGGFTFKRTKGFSVKREEEVLTGNLQTLKIKVHEGYEEFTMVGRRATAILRKATRRMIQLIVSGRDEQSIAEAIIVAMVFSQEDCMIKAVRGDLNFVNRANQRLNPMHQLLRHFQKDAKVLFQNWGIEPIDNVMGMIGILPDMTPSTEMSLRGVRVSKMGVDEYSSTERVVVSIDRFLRVRDQRGNVLLSPEEVSETQGMEKLTITYSSSMMWEINGPESVLVNTYQWIIRNWETVKIQWSQEPTMLYNKMEFEPFQSLVPKAARSQYSGFVRTLFQQMRDVLGTFDTVQIIKLLPFAAAPPEQSRMQFSSLTVNVRGSGMRILVRGNSPAFNYNKTTKRLTILGKDA</sequence>
<name>PB2_I97A0</name>
<organism>
    <name type="scientific">Influenza A virus (strain A/Chicken/Hong Kong/220/1997 H5N1 genotype Gs/Gd)</name>
    <dbReference type="NCBI Taxonomy" id="100834"/>
    <lineage>
        <taxon>Viruses</taxon>
        <taxon>Riboviria</taxon>
        <taxon>Orthornavirae</taxon>
        <taxon>Negarnaviricota</taxon>
        <taxon>Polyploviricotina</taxon>
        <taxon>Insthoviricetes</taxon>
        <taxon>Articulavirales</taxon>
        <taxon>Orthomyxoviridae</taxon>
        <taxon>Alphainfluenzavirus</taxon>
        <taxon>Alphainfluenzavirus influenzae</taxon>
        <taxon>Influenza A virus</taxon>
    </lineage>
</organism>
<organismHost>
    <name type="scientific">Aves</name>
    <dbReference type="NCBI Taxonomy" id="8782"/>
</organismHost>
<organismHost>
    <name type="scientific">Felis catus</name>
    <name type="common">Cat</name>
    <name type="synonym">Felis silvestris catus</name>
    <dbReference type="NCBI Taxonomy" id="9685"/>
</organismHost>
<organismHost>
    <name type="scientific">Homo sapiens</name>
    <name type="common">Human</name>
    <dbReference type="NCBI Taxonomy" id="9606"/>
</organismHost>
<organismHost>
    <name type="scientific">Panthera pardus</name>
    <name type="common">Leopard</name>
    <name type="synonym">Felis pardus</name>
    <dbReference type="NCBI Taxonomy" id="9691"/>
</organismHost>
<organismHost>
    <name type="scientific">Panthera tigris</name>
    <name type="common">Tiger</name>
    <dbReference type="NCBI Taxonomy" id="9694"/>
</organismHost>
<organismHost>
    <name type="scientific">Sus scrofa</name>
    <name type="common">Pig</name>
    <dbReference type="NCBI Taxonomy" id="9823"/>
</organismHost>
<protein>
    <recommendedName>
        <fullName>Polymerase basic protein 2</fullName>
    </recommendedName>
    <alternativeName>
        <fullName>RNA-directed RNA polymerase subunit P3</fullName>
    </alternativeName>
</protein>
<reference key="1">
    <citation type="journal article" date="1998" name="J. Virol.">
        <title>Comparisons of highly virulent H5N1 influenza A viruses isolated from humans and chickens from Hong Kong.</title>
        <authorList>
            <person name="Suarez D.L."/>
            <person name="Perdue M.L."/>
            <person name="Cox N."/>
            <person name="Rowe T."/>
            <person name="Bender C."/>
            <person name="Huang J."/>
            <person name="Swayne D.E."/>
        </authorList>
    </citation>
    <scope>NUCLEOTIDE SEQUENCE [GENOMIC RNA]</scope>
</reference>
<feature type="chain" id="PRO_0000279623" description="Polymerase basic protein 2">
    <location>
        <begin position="1"/>
        <end position="672"/>
    </location>
</feature>
<feature type="non-terminal residue">
    <location>
        <position position="672"/>
    </location>
</feature>